<comment type="function">
    <text evidence="1">Catalyzes the excretion of spermidine.</text>
</comment>
<comment type="subunit">
    <text evidence="1">Forms a complex with MdtJ.</text>
</comment>
<comment type="subcellular location">
    <subcellularLocation>
        <location evidence="1">Cell inner membrane</location>
        <topology evidence="1">Multi-pass membrane protein</topology>
    </subcellularLocation>
</comment>
<comment type="similarity">
    <text evidence="1">Belongs to the drug/metabolite transporter (DMT) superfamily. Small multidrug resistance (SMR) (TC 2.A.7.1) family. MdtI subfamily.</text>
</comment>
<name>MDTI_YERP3</name>
<feature type="chain" id="PRO_0000331162" description="Spermidine export protein MdtI">
    <location>
        <begin position="1"/>
        <end position="109"/>
    </location>
</feature>
<feature type="transmembrane region" description="Helical" evidence="1">
    <location>
        <begin position="6"/>
        <end position="26"/>
    </location>
</feature>
<feature type="transmembrane region" description="Helical" evidence="1">
    <location>
        <begin position="36"/>
        <end position="56"/>
    </location>
</feature>
<feature type="transmembrane region" description="Helical" evidence="1">
    <location>
        <begin position="64"/>
        <end position="84"/>
    </location>
</feature>
<feature type="transmembrane region" description="Helical" evidence="1">
    <location>
        <begin position="88"/>
        <end position="108"/>
    </location>
</feature>
<keyword id="KW-0997">Cell inner membrane</keyword>
<keyword id="KW-1003">Cell membrane</keyword>
<keyword id="KW-0472">Membrane</keyword>
<keyword id="KW-0812">Transmembrane</keyword>
<keyword id="KW-1133">Transmembrane helix</keyword>
<keyword id="KW-0813">Transport</keyword>
<gene>
    <name evidence="1" type="primary">mdtI</name>
    <name type="ordered locus">YpsIP31758_2019</name>
</gene>
<dbReference type="EMBL" id="CP000720">
    <property type="protein sequence ID" value="ABS46134.1"/>
    <property type="molecule type" value="Genomic_DNA"/>
</dbReference>
<dbReference type="RefSeq" id="WP_002211187.1">
    <property type="nucleotide sequence ID" value="NC_009708.1"/>
</dbReference>
<dbReference type="SMR" id="A7FIB4"/>
<dbReference type="GeneID" id="57976592"/>
<dbReference type="KEGG" id="ypi:YpsIP31758_2019"/>
<dbReference type="HOGENOM" id="CLU_133067_0_4_6"/>
<dbReference type="Proteomes" id="UP000002412">
    <property type="component" value="Chromosome"/>
</dbReference>
<dbReference type="GO" id="GO:0005886">
    <property type="term" value="C:plasma membrane"/>
    <property type="evidence" value="ECO:0007669"/>
    <property type="project" value="UniProtKB-SubCell"/>
</dbReference>
<dbReference type="GO" id="GO:0015199">
    <property type="term" value="F:amino-acid betaine transmembrane transporter activity"/>
    <property type="evidence" value="ECO:0007669"/>
    <property type="project" value="TreeGrafter"/>
</dbReference>
<dbReference type="GO" id="GO:0015297">
    <property type="term" value="F:antiporter activity"/>
    <property type="evidence" value="ECO:0007669"/>
    <property type="project" value="TreeGrafter"/>
</dbReference>
<dbReference type="GO" id="GO:0015220">
    <property type="term" value="F:choline transmembrane transporter activity"/>
    <property type="evidence" value="ECO:0007669"/>
    <property type="project" value="TreeGrafter"/>
</dbReference>
<dbReference type="GO" id="GO:0015606">
    <property type="term" value="F:spermidine transmembrane transporter activity"/>
    <property type="evidence" value="ECO:0007669"/>
    <property type="project" value="UniProtKB-UniRule"/>
</dbReference>
<dbReference type="GO" id="GO:0031460">
    <property type="term" value="P:glycine betaine transport"/>
    <property type="evidence" value="ECO:0007669"/>
    <property type="project" value="TreeGrafter"/>
</dbReference>
<dbReference type="FunFam" id="1.10.3730.20:FF:000001">
    <property type="entry name" value="Quaternary ammonium compound resistance transporter SugE"/>
    <property type="match status" value="1"/>
</dbReference>
<dbReference type="Gene3D" id="1.10.3730.20">
    <property type="match status" value="1"/>
</dbReference>
<dbReference type="HAMAP" id="MF_01597">
    <property type="entry name" value="MdtI"/>
    <property type="match status" value="1"/>
</dbReference>
<dbReference type="InterPro" id="IPR000390">
    <property type="entry name" value="Small_drug/metabolite_transptr"/>
</dbReference>
<dbReference type="InterPro" id="IPR045324">
    <property type="entry name" value="Small_multidrug_res"/>
</dbReference>
<dbReference type="InterPro" id="IPR023737">
    <property type="entry name" value="Spermidine_export_MdtI"/>
</dbReference>
<dbReference type="NCBIfam" id="NF007934">
    <property type="entry name" value="PRK10650.1"/>
    <property type="match status" value="1"/>
</dbReference>
<dbReference type="PANTHER" id="PTHR30561">
    <property type="entry name" value="SMR FAMILY PROTON-DEPENDENT DRUG EFFLUX TRANSPORTER SUGE"/>
    <property type="match status" value="1"/>
</dbReference>
<dbReference type="PANTHER" id="PTHR30561:SF6">
    <property type="entry name" value="SPERMIDINE EXPORT PROTEIN MDTI"/>
    <property type="match status" value="1"/>
</dbReference>
<dbReference type="Pfam" id="PF00893">
    <property type="entry name" value="Multi_Drug_Res"/>
    <property type="match status" value="1"/>
</dbReference>
<dbReference type="SUPFAM" id="SSF103481">
    <property type="entry name" value="Multidrug resistance efflux transporter EmrE"/>
    <property type="match status" value="1"/>
</dbReference>
<reference key="1">
    <citation type="journal article" date="2007" name="PLoS Genet.">
        <title>The complete genome sequence of Yersinia pseudotuberculosis IP31758, the causative agent of Far East scarlet-like fever.</title>
        <authorList>
            <person name="Eppinger M."/>
            <person name="Rosovitz M.J."/>
            <person name="Fricke W.F."/>
            <person name="Rasko D.A."/>
            <person name="Kokorina G."/>
            <person name="Fayolle C."/>
            <person name="Lindler L.E."/>
            <person name="Carniel E."/>
            <person name="Ravel J."/>
        </authorList>
    </citation>
    <scope>NUCLEOTIDE SEQUENCE [LARGE SCALE GENOMIC DNA]</scope>
    <source>
        <strain>IP 31758</strain>
    </source>
</reference>
<organism>
    <name type="scientific">Yersinia pseudotuberculosis serotype O:1b (strain IP 31758)</name>
    <dbReference type="NCBI Taxonomy" id="349747"/>
    <lineage>
        <taxon>Bacteria</taxon>
        <taxon>Pseudomonadati</taxon>
        <taxon>Pseudomonadota</taxon>
        <taxon>Gammaproteobacteria</taxon>
        <taxon>Enterobacterales</taxon>
        <taxon>Yersiniaceae</taxon>
        <taxon>Yersinia</taxon>
    </lineage>
</organism>
<sequence>MQQLEFYPIAFLILAVMLEIVANILLKMSDGFRRKWLGILSLLSVLGAFSALAQAVKGIELSVAYALWGGFGIAATVAAGWILFNQRLNYKGWIGLILLLAGMVMIKLS</sequence>
<proteinExistence type="inferred from homology"/>
<accession>A7FIB4</accession>
<evidence type="ECO:0000255" key="1">
    <source>
        <dbReference type="HAMAP-Rule" id="MF_01597"/>
    </source>
</evidence>
<protein>
    <recommendedName>
        <fullName evidence="1">Spermidine export protein MdtI</fullName>
    </recommendedName>
</protein>